<keyword id="KW-0131">Cell cycle</keyword>
<keyword id="KW-0132">Cell division</keyword>
<keyword id="KW-0342">GTP-binding</keyword>
<keyword id="KW-0460">Magnesium</keyword>
<keyword id="KW-0479">Metal-binding</keyword>
<keyword id="KW-0547">Nucleotide-binding</keyword>
<keyword id="KW-1185">Reference proteome</keyword>
<keyword id="KW-0717">Septation</keyword>
<evidence type="ECO:0000255" key="1">
    <source>
        <dbReference type="HAMAP-Rule" id="MF_00321"/>
    </source>
</evidence>
<organism>
    <name type="scientific">Alkaliphilus oremlandii (strain OhILAs)</name>
    <name type="common">Clostridium oremlandii (strain OhILAs)</name>
    <dbReference type="NCBI Taxonomy" id="350688"/>
    <lineage>
        <taxon>Bacteria</taxon>
        <taxon>Bacillati</taxon>
        <taxon>Bacillota</taxon>
        <taxon>Clostridia</taxon>
        <taxon>Peptostreptococcales</taxon>
        <taxon>Natronincolaceae</taxon>
        <taxon>Alkaliphilus</taxon>
    </lineage>
</organism>
<protein>
    <recommendedName>
        <fullName evidence="1">Probable GTP-binding protein EngB</fullName>
    </recommendedName>
</protein>
<name>ENGB_ALKOO</name>
<gene>
    <name evidence="1" type="primary">engB</name>
    <name type="ordered locus">Clos_2170</name>
</gene>
<sequence length="208" mass="23668">MKVISSEIVISAVAPKQYPENGLPEIALAGRSNVGKSSTVNTILKRRKLARVSASPGKTRTINFYIVNNEFHIVDLPGYGYAKVSKGEKETWGKMMETYLSSRKNLYEVILLVDIRHEPTADDKMMYDWIKHYGYGSIVIATKSDKISRGAYQKHFKMIREKLGMSPEDKIIPISSLKREGIDKLWHSIEEIFIANNLPITIEEAEEY</sequence>
<accession>A8MIS4</accession>
<reference key="1">
    <citation type="submission" date="2007-10" db="EMBL/GenBank/DDBJ databases">
        <title>Complete genome of Alkaliphilus oremlandii OhILAs.</title>
        <authorList>
            <person name="Copeland A."/>
            <person name="Lucas S."/>
            <person name="Lapidus A."/>
            <person name="Barry K."/>
            <person name="Detter J.C."/>
            <person name="Glavina del Rio T."/>
            <person name="Hammon N."/>
            <person name="Israni S."/>
            <person name="Dalin E."/>
            <person name="Tice H."/>
            <person name="Pitluck S."/>
            <person name="Chain P."/>
            <person name="Malfatti S."/>
            <person name="Shin M."/>
            <person name="Vergez L."/>
            <person name="Schmutz J."/>
            <person name="Larimer F."/>
            <person name="Land M."/>
            <person name="Hauser L."/>
            <person name="Kyrpides N."/>
            <person name="Mikhailova N."/>
            <person name="Stolz J.F."/>
            <person name="Dawson A."/>
            <person name="Fisher E."/>
            <person name="Crable B."/>
            <person name="Perera E."/>
            <person name="Lisak J."/>
            <person name="Ranganathan M."/>
            <person name="Basu P."/>
            <person name="Richardson P."/>
        </authorList>
    </citation>
    <scope>NUCLEOTIDE SEQUENCE [LARGE SCALE GENOMIC DNA]</scope>
    <source>
        <strain>OhILAs</strain>
    </source>
</reference>
<feature type="chain" id="PRO_1000059467" description="Probable GTP-binding protein EngB">
    <location>
        <begin position="1"/>
        <end position="208"/>
    </location>
</feature>
<feature type="domain" description="EngB-type G" evidence="1">
    <location>
        <begin position="22"/>
        <end position="195"/>
    </location>
</feature>
<feature type="binding site" evidence="1">
    <location>
        <begin position="30"/>
        <end position="37"/>
    </location>
    <ligand>
        <name>GTP</name>
        <dbReference type="ChEBI" id="CHEBI:37565"/>
    </ligand>
</feature>
<feature type="binding site" evidence="1">
    <location>
        <position position="37"/>
    </location>
    <ligand>
        <name>Mg(2+)</name>
        <dbReference type="ChEBI" id="CHEBI:18420"/>
    </ligand>
</feature>
<feature type="binding site" evidence="1">
    <location>
        <begin position="57"/>
        <end position="61"/>
    </location>
    <ligand>
        <name>GTP</name>
        <dbReference type="ChEBI" id="CHEBI:37565"/>
    </ligand>
</feature>
<feature type="binding site" evidence="1">
    <location>
        <position position="59"/>
    </location>
    <ligand>
        <name>Mg(2+)</name>
        <dbReference type="ChEBI" id="CHEBI:18420"/>
    </ligand>
</feature>
<feature type="binding site" evidence="1">
    <location>
        <begin position="75"/>
        <end position="78"/>
    </location>
    <ligand>
        <name>GTP</name>
        <dbReference type="ChEBI" id="CHEBI:37565"/>
    </ligand>
</feature>
<feature type="binding site" evidence="1">
    <location>
        <begin position="142"/>
        <end position="145"/>
    </location>
    <ligand>
        <name>GTP</name>
        <dbReference type="ChEBI" id="CHEBI:37565"/>
    </ligand>
</feature>
<feature type="binding site" evidence="1">
    <location>
        <begin position="174"/>
        <end position="176"/>
    </location>
    <ligand>
        <name>GTP</name>
        <dbReference type="ChEBI" id="CHEBI:37565"/>
    </ligand>
</feature>
<proteinExistence type="inferred from homology"/>
<comment type="function">
    <text evidence="1">Necessary for normal cell division and for the maintenance of normal septation.</text>
</comment>
<comment type="cofactor">
    <cofactor evidence="1">
        <name>Mg(2+)</name>
        <dbReference type="ChEBI" id="CHEBI:18420"/>
    </cofactor>
</comment>
<comment type="similarity">
    <text evidence="1">Belongs to the TRAFAC class TrmE-Era-EngA-EngB-Septin-like GTPase superfamily. EngB GTPase family.</text>
</comment>
<dbReference type="EMBL" id="CP000853">
    <property type="protein sequence ID" value="ABW19706.1"/>
    <property type="molecule type" value="Genomic_DNA"/>
</dbReference>
<dbReference type="RefSeq" id="WP_012160015.1">
    <property type="nucleotide sequence ID" value="NC_009922.1"/>
</dbReference>
<dbReference type="SMR" id="A8MIS4"/>
<dbReference type="STRING" id="350688.Clos_2170"/>
<dbReference type="KEGG" id="aoe:Clos_2170"/>
<dbReference type="eggNOG" id="COG0218">
    <property type="taxonomic scope" value="Bacteria"/>
</dbReference>
<dbReference type="HOGENOM" id="CLU_033732_3_0_9"/>
<dbReference type="OrthoDB" id="9804921at2"/>
<dbReference type="Proteomes" id="UP000000269">
    <property type="component" value="Chromosome"/>
</dbReference>
<dbReference type="GO" id="GO:0005829">
    <property type="term" value="C:cytosol"/>
    <property type="evidence" value="ECO:0007669"/>
    <property type="project" value="TreeGrafter"/>
</dbReference>
<dbReference type="GO" id="GO:0005525">
    <property type="term" value="F:GTP binding"/>
    <property type="evidence" value="ECO:0007669"/>
    <property type="project" value="UniProtKB-UniRule"/>
</dbReference>
<dbReference type="GO" id="GO:0046872">
    <property type="term" value="F:metal ion binding"/>
    <property type="evidence" value="ECO:0007669"/>
    <property type="project" value="UniProtKB-KW"/>
</dbReference>
<dbReference type="GO" id="GO:0000917">
    <property type="term" value="P:division septum assembly"/>
    <property type="evidence" value="ECO:0007669"/>
    <property type="project" value="UniProtKB-KW"/>
</dbReference>
<dbReference type="CDD" id="cd01876">
    <property type="entry name" value="YihA_EngB"/>
    <property type="match status" value="1"/>
</dbReference>
<dbReference type="FunFam" id="3.40.50.300:FF:000098">
    <property type="entry name" value="Probable GTP-binding protein EngB"/>
    <property type="match status" value="1"/>
</dbReference>
<dbReference type="Gene3D" id="3.40.50.300">
    <property type="entry name" value="P-loop containing nucleotide triphosphate hydrolases"/>
    <property type="match status" value="1"/>
</dbReference>
<dbReference type="HAMAP" id="MF_00321">
    <property type="entry name" value="GTPase_EngB"/>
    <property type="match status" value="1"/>
</dbReference>
<dbReference type="InterPro" id="IPR030393">
    <property type="entry name" value="G_ENGB_dom"/>
</dbReference>
<dbReference type="InterPro" id="IPR006073">
    <property type="entry name" value="GTP-bd"/>
</dbReference>
<dbReference type="InterPro" id="IPR019987">
    <property type="entry name" value="GTP-bd_ribosome_bio_YsxC"/>
</dbReference>
<dbReference type="InterPro" id="IPR027417">
    <property type="entry name" value="P-loop_NTPase"/>
</dbReference>
<dbReference type="InterPro" id="IPR005225">
    <property type="entry name" value="Small_GTP-bd"/>
</dbReference>
<dbReference type="NCBIfam" id="TIGR03598">
    <property type="entry name" value="GTPase_YsxC"/>
    <property type="match status" value="1"/>
</dbReference>
<dbReference type="NCBIfam" id="TIGR00231">
    <property type="entry name" value="small_GTP"/>
    <property type="match status" value="1"/>
</dbReference>
<dbReference type="PANTHER" id="PTHR11649:SF13">
    <property type="entry name" value="ENGB-TYPE G DOMAIN-CONTAINING PROTEIN"/>
    <property type="match status" value="1"/>
</dbReference>
<dbReference type="PANTHER" id="PTHR11649">
    <property type="entry name" value="MSS1/TRME-RELATED GTP-BINDING PROTEIN"/>
    <property type="match status" value="1"/>
</dbReference>
<dbReference type="Pfam" id="PF01926">
    <property type="entry name" value="MMR_HSR1"/>
    <property type="match status" value="1"/>
</dbReference>
<dbReference type="SUPFAM" id="SSF52540">
    <property type="entry name" value="P-loop containing nucleoside triphosphate hydrolases"/>
    <property type="match status" value="1"/>
</dbReference>
<dbReference type="PROSITE" id="PS51706">
    <property type="entry name" value="G_ENGB"/>
    <property type="match status" value="1"/>
</dbReference>